<organism>
    <name type="scientific">Cronobacter sakazakii (strain ATCC BAA-894)</name>
    <name type="common">Enterobacter sakazakii</name>
    <dbReference type="NCBI Taxonomy" id="290339"/>
    <lineage>
        <taxon>Bacteria</taxon>
        <taxon>Pseudomonadati</taxon>
        <taxon>Pseudomonadota</taxon>
        <taxon>Gammaproteobacteria</taxon>
        <taxon>Enterobacterales</taxon>
        <taxon>Enterobacteriaceae</taxon>
        <taxon>Cronobacter</taxon>
    </lineage>
</organism>
<protein>
    <recommendedName>
        <fullName evidence="1">RNA-binding protein Hfq</fullName>
    </recommendedName>
</protein>
<evidence type="ECO:0000255" key="1">
    <source>
        <dbReference type="HAMAP-Rule" id="MF_00436"/>
    </source>
</evidence>
<evidence type="ECO:0000255" key="2">
    <source>
        <dbReference type="PROSITE-ProRule" id="PRU01346"/>
    </source>
</evidence>
<evidence type="ECO:0000256" key="3">
    <source>
        <dbReference type="SAM" id="MobiDB-lite"/>
    </source>
</evidence>
<feature type="chain" id="PRO_1000025907" description="RNA-binding protein Hfq">
    <location>
        <begin position="1"/>
        <end position="102"/>
    </location>
</feature>
<feature type="domain" description="Sm" evidence="2">
    <location>
        <begin position="9"/>
        <end position="68"/>
    </location>
</feature>
<feature type="region of interest" description="Disordered" evidence="3">
    <location>
        <begin position="63"/>
        <end position="102"/>
    </location>
</feature>
<feature type="compositionally biased region" description="Low complexity" evidence="3">
    <location>
        <begin position="70"/>
        <end position="96"/>
    </location>
</feature>
<name>HFQ_CROS8</name>
<comment type="function">
    <text evidence="1">RNA chaperone that binds small regulatory RNA (sRNAs) and mRNAs to facilitate mRNA translational regulation in response to envelope stress, environmental stress and changes in metabolite concentrations. Also binds with high specificity to tRNAs.</text>
</comment>
<comment type="subunit">
    <text evidence="1">Homohexamer.</text>
</comment>
<comment type="similarity">
    <text evidence="1">Belongs to the Hfq family.</text>
</comment>
<sequence length="102" mass="11131">MAKGQSLQDPFLNALRRERVPVSIYLVNGIKLQGQIESFDQFVILLKNTVSQMVYKHAISTVVPSRPVSHHSNNAGGGSNNYHHSNNAQPSSAASQDSEDAE</sequence>
<keyword id="KW-1185">Reference proteome</keyword>
<keyword id="KW-0694">RNA-binding</keyword>
<keyword id="KW-0346">Stress response</keyword>
<proteinExistence type="inferred from homology"/>
<accession>A7MM89</accession>
<dbReference type="EMBL" id="CP000783">
    <property type="protein sequence ID" value="ABU75483.1"/>
    <property type="molecule type" value="Genomic_DNA"/>
</dbReference>
<dbReference type="RefSeq" id="WP_004385293.1">
    <property type="nucleotide sequence ID" value="NC_009778.1"/>
</dbReference>
<dbReference type="SMR" id="A7MM89"/>
<dbReference type="GeneID" id="92211620"/>
<dbReference type="KEGG" id="esa:ESA_00182"/>
<dbReference type="HOGENOM" id="CLU_113688_2_1_6"/>
<dbReference type="Proteomes" id="UP000000260">
    <property type="component" value="Chromosome"/>
</dbReference>
<dbReference type="GO" id="GO:0005829">
    <property type="term" value="C:cytosol"/>
    <property type="evidence" value="ECO:0007669"/>
    <property type="project" value="TreeGrafter"/>
</dbReference>
<dbReference type="GO" id="GO:0003723">
    <property type="term" value="F:RNA binding"/>
    <property type="evidence" value="ECO:0007669"/>
    <property type="project" value="UniProtKB-UniRule"/>
</dbReference>
<dbReference type="GO" id="GO:0006355">
    <property type="term" value="P:regulation of DNA-templated transcription"/>
    <property type="evidence" value="ECO:0007669"/>
    <property type="project" value="InterPro"/>
</dbReference>
<dbReference type="GO" id="GO:0043487">
    <property type="term" value="P:regulation of RNA stability"/>
    <property type="evidence" value="ECO:0007669"/>
    <property type="project" value="TreeGrafter"/>
</dbReference>
<dbReference type="GO" id="GO:0045974">
    <property type="term" value="P:regulation of translation, ncRNA-mediated"/>
    <property type="evidence" value="ECO:0007669"/>
    <property type="project" value="TreeGrafter"/>
</dbReference>
<dbReference type="CDD" id="cd01716">
    <property type="entry name" value="Hfq"/>
    <property type="match status" value="1"/>
</dbReference>
<dbReference type="FunFam" id="2.30.30.100:FF:000001">
    <property type="entry name" value="RNA-binding protein Hfq"/>
    <property type="match status" value="1"/>
</dbReference>
<dbReference type="Gene3D" id="2.30.30.100">
    <property type="match status" value="1"/>
</dbReference>
<dbReference type="HAMAP" id="MF_00436">
    <property type="entry name" value="Hfq"/>
    <property type="match status" value="1"/>
</dbReference>
<dbReference type="InterPro" id="IPR005001">
    <property type="entry name" value="Hfq"/>
</dbReference>
<dbReference type="InterPro" id="IPR010920">
    <property type="entry name" value="LSM_dom_sf"/>
</dbReference>
<dbReference type="InterPro" id="IPR047575">
    <property type="entry name" value="Sm"/>
</dbReference>
<dbReference type="NCBIfam" id="TIGR02383">
    <property type="entry name" value="Hfq"/>
    <property type="match status" value="1"/>
</dbReference>
<dbReference type="NCBIfam" id="NF001602">
    <property type="entry name" value="PRK00395.1"/>
    <property type="match status" value="1"/>
</dbReference>
<dbReference type="PANTHER" id="PTHR34772">
    <property type="entry name" value="RNA-BINDING PROTEIN HFQ"/>
    <property type="match status" value="1"/>
</dbReference>
<dbReference type="PANTHER" id="PTHR34772:SF1">
    <property type="entry name" value="RNA-BINDING PROTEIN HFQ"/>
    <property type="match status" value="1"/>
</dbReference>
<dbReference type="Pfam" id="PF17209">
    <property type="entry name" value="Hfq"/>
    <property type="match status" value="1"/>
</dbReference>
<dbReference type="SUPFAM" id="SSF50182">
    <property type="entry name" value="Sm-like ribonucleoproteins"/>
    <property type="match status" value="1"/>
</dbReference>
<dbReference type="PROSITE" id="PS52002">
    <property type="entry name" value="SM"/>
    <property type="match status" value="1"/>
</dbReference>
<reference key="1">
    <citation type="journal article" date="2010" name="PLoS ONE">
        <title>Genome sequence of Cronobacter sakazakii BAA-894 and comparative genomic hybridization analysis with other Cronobacter species.</title>
        <authorList>
            <person name="Kucerova E."/>
            <person name="Clifton S.W."/>
            <person name="Xia X.Q."/>
            <person name="Long F."/>
            <person name="Porwollik S."/>
            <person name="Fulton L."/>
            <person name="Fronick C."/>
            <person name="Minx P."/>
            <person name="Kyung K."/>
            <person name="Warren W."/>
            <person name="Fulton R."/>
            <person name="Feng D."/>
            <person name="Wollam A."/>
            <person name="Shah N."/>
            <person name="Bhonagiri V."/>
            <person name="Nash W.E."/>
            <person name="Hallsworth-Pepin K."/>
            <person name="Wilson R.K."/>
            <person name="McClelland M."/>
            <person name="Forsythe S.J."/>
        </authorList>
    </citation>
    <scope>NUCLEOTIDE SEQUENCE [LARGE SCALE GENOMIC DNA]</scope>
    <source>
        <strain>ATCC BAA-894</strain>
    </source>
</reference>
<gene>
    <name evidence="1" type="primary">hfq</name>
    <name type="ordered locus">ESA_00182</name>
</gene>